<name>SRY_PAGGO</name>
<keyword id="KW-0010">Activator</keyword>
<keyword id="KW-0112">Calmodulin-binding</keyword>
<keyword id="KW-0963">Cytoplasm</keyword>
<keyword id="KW-0221">Differentiation</keyword>
<keyword id="KW-0238">DNA-binding</keyword>
<keyword id="KW-0539">Nucleus</keyword>
<keyword id="KW-0726">Sexual differentiation</keyword>
<keyword id="KW-0804">Transcription</keyword>
<keyword id="KW-0805">Transcription regulation</keyword>
<comment type="function">
    <text evidence="1 2">Transcriptional regulator that controls a genetic switch in male development. It is necessary and sufficient for initiating male sex determination by directing the development of supporting cell precursors (pre-Sertoli cells) as Sertoli rather than granulosa cells. Involved in different aspects of gene regulation including promoter activation or repression. Binds to the DNA consensus sequence 5'-[AT]AACAA[AT]-3'. SRY HMG box recognizes DNA by partial intercalation in the minor groove and promotes DNA bending. Also involved in pre-mRNA splicing (By similarity). In male adult brain involved in the maintenance of motor functions of dopaminergic neurons (By similarity).</text>
</comment>
<comment type="subunit">
    <text evidence="2">Interacts with CALM, EP300, HDAC3, KPNB1, ZNF208 isoform KRAB-O, PARP1, SLC9A3R2 and WT1. The interaction with EP300 modulates its DNA-binding activity. The interaction with KPNB1 is sensitive to dissociation by Ran in the GTP-bound form. Interaction with PARP1 impaired its DNA-binding activity.</text>
</comment>
<comment type="subcellular location">
    <subcellularLocation>
        <location evidence="2">Nucleus speckle</location>
    </subcellularLocation>
    <subcellularLocation>
        <location evidence="2">Cytoplasm</location>
    </subcellularLocation>
    <subcellularLocation>
        <location evidence="2">Nucleus</location>
    </subcellularLocation>
</comment>
<comment type="similarity">
    <text evidence="5">Belongs to the SRY family.</text>
</comment>
<comment type="online information" name="Protein Spotlight">
    <link uri="https://www.proteinspotlight.org/back_issues/080"/>
    <text>The tenuous nature of sex - Issue 80 of March 2007</text>
</comment>
<accession>Q6TC36</accession>
<reference key="1">
    <citation type="submission" date="2003-09" db="EMBL/GenBank/DDBJ databases">
        <title>A phylogeny of the pinnipeds from mitochondrial and single copy nuclear gene sequences.</title>
        <authorList>
            <person name="Kinnear M.W."/>
            <person name="Walker G."/>
            <person name="Amos W."/>
        </authorList>
    </citation>
    <scope>NUCLEOTIDE SEQUENCE [GENOMIC DNA]</scope>
</reference>
<gene>
    <name type="primary">SRY</name>
    <name type="synonym">TDF</name>
</gene>
<sequence length="221" mass="25842">MFGVLNSNDHRAAVQQRNIPAFGRTSFEPWTDNPTSNYRCEPGGNGRDSGQNRVRRPMNAFMVWSRDQRRKVALENPQMQNSEISKQLGYQWKMLTEAEKWPFFEEAQRLQAMHREKYPDYKYRPRRKALPQKSDKLLPAASSSMLCRQVLVDEKWYPFTYRDSCSRAAHSRMEDQLSSSQPVNIANSLLQQEHHYRSTSLRDSPETLATHLSADPPFYPK</sequence>
<dbReference type="EMBL" id="AY424659">
    <property type="protein sequence ID" value="AAR10370.1"/>
    <property type="molecule type" value="Genomic_DNA"/>
</dbReference>
<dbReference type="SMR" id="Q6TC36"/>
<dbReference type="GO" id="GO:0005737">
    <property type="term" value="C:cytoplasm"/>
    <property type="evidence" value="ECO:0007669"/>
    <property type="project" value="UniProtKB-SubCell"/>
</dbReference>
<dbReference type="GO" id="GO:0016607">
    <property type="term" value="C:nuclear speck"/>
    <property type="evidence" value="ECO:0007669"/>
    <property type="project" value="UniProtKB-SubCell"/>
</dbReference>
<dbReference type="GO" id="GO:0005634">
    <property type="term" value="C:nucleus"/>
    <property type="evidence" value="ECO:0000250"/>
    <property type="project" value="UniProtKB"/>
</dbReference>
<dbReference type="GO" id="GO:0005516">
    <property type="term" value="F:calmodulin binding"/>
    <property type="evidence" value="ECO:0007669"/>
    <property type="project" value="UniProtKB-KW"/>
</dbReference>
<dbReference type="GO" id="GO:0001228">
    <property type="term" value="F:DNA-binding transcription activator activity, RNA polymerase II-specific"/>
    <property type="evidence" value="ECO:0007669"/>
    <property type="project" value="TreeGrafter"/>
</dbReference>
<dbReference type="GO" id="GO:0000978">
    <property type="term" value="F:RNA polymerase II cis-regulatory region sequence-specific DNA binding"/>
    <property type="evidence" value="ECO:0007669"/>
    <property type="project" value="TreeGrafter"/>
</dbReference>
<dbReference type="GO" id="GO:0030154">
    <property type="term" value="P:cell differentiation"/>
    <property type="evidence" value="ECO:0007669"/>
    <property type="project" value="UniProtKB-KW"/>
</dbReference>
<dbReference type="GO" id="GO:0030238">
    <property type="term" value="P:male sex determination"/>
    <property type="evidence" value="ECO:0007669"/>
    <property type="project" value="InterPro"/>
</dbReference>
<dbReference type="GO" id="GO:0007548">
    <property type="term" value="P:sex differentiation"/>
    <property type="evidence" value="ECO:0007669"/>
    <property type="project" value="UniProtKB-KW"/>
</dbReference>
<dbReference type="CDD" id="cd22034">
    <property type="entry name" value="HMG-box_SoxA_SRY"/>
    <property type="match status" value="1"/>
</dbReference>
<dbReference type="FunFam" id="1.10.30.10:FF:000002">
    <property type="entry name" value="transcription factor Sox-2"/>
    <property type="match status" value="1"/>
</dbReference>
<dbReference type="Gene3D" id="1.10.30.10">
    <property type="entry name" value="High mobility group box domain"/>
    <property type="match status" value="1"/>
</dbReference>
<dbReference type="InterPro" id="IPR009071">
    <property type="entry name" value="HMG_box_dom"/>
</dbReference>
<dbReference type="InterPro" id="IPR036910">
    <property type="entry name" value="HMG_box_dom_sf"/>
</dbReference>
<dbReference type="InterPro" id="IPR017253">
    <property type="entry name" value="SRY"/>
</dbReference>
<dbReference type="InterPro" id="IPR050140">
    <property type="entry name" value="SRY-related_HMG-box_TF-like"/>
</dbReference>
<dbReference type="PANTHER" id="PTHR10270:SF161">
    <property type="entry name" value="SEX-DETERMINING REGION Y PROTEIN"/>
    <property type="match status" value="1"/>
</dbReference>
<dbReference type="PANTHER" id="PTHR10270">
    <property type="entry name" value="SOX TRANSCRIPTION FACTOR"/>
    <property type="match status" value="1"/>
</dbReference>
<dbReference type="Pfam" id="PF00505">
    <property type="entry name" value="HMG_box"/>
    <property type="match status" value="1"/>
</dbReference>
<dbReference type="PIRSF" id="PIRSF037653">
    <property type="entry name" value="SRY"/>
    <property type="match status" value="1"/>
</dbReference>
<dbReference type="SMART" id="SM00398">
    <property type="entry name" value="HMG"/>
    <property type="match status" value="1"/>
</dbReference>
<dbReference type="SUPFAM" id="SSF47095">
    <property type="entry name" value="HMG-box"/>
    <property type="match status" value="1"/>
</dbReference>
<dbReference type="PROSITE" id="PS50118">
    <property type="entry name" value="HMG_BOX_2"/>
    <property type="match status" value="1"/>
</dbReference>
<protein>
    <recommendedName>
        <fullName>Sex-determining region Y protein</fullName>
    </recommendedName>
    <alternativeName>
        <fullName>Testis-determining factor</fullName>
    </alternativeName>
</protein>
<organism>
    <name type="scientific">Pagophilus groenlandicus</name>
    <name type="common">Harp seal</name>
    <name type="synonym">Phoca groenlandica</name>
    <dbReference type="NCBI Taxonomy" id="39089"/>
    <lineage>
        <taxon>Eukaryota</taxon>
        <taxon>Metazoa</taxon>
        <taxon>Chordata</taxon>
        <taxon>Craniata</taxon>
        <taxon>Vertebrata</taxon>
        <taxon>Euteleostomi</taxon>
        <taxon>Mammalia</taxon>
        <taxon>Eutheria</taxon>
        <taxon>Laurasiatheria</taxon>
        <taxon>Carnivora</taxon>
        <taxon>Caniformia</taxon>
        <taxon>Pinnipedia</taxon>
        <taxon>Phocidae</taxon>
        <taxon>Phocinae</taxon>
        <taxon>Phoca</taxon>
    </lineage>
</organism>
<evidence type="ECO:0000250" key="1">
    <source>
        <dbReference type="UniProtKB" id="P36394"/>
    </source>
</evidence>
<evidence type="ECO:0000250" key="2">
    <source>
        <dbReference type="UniProtKB" id="Q05066"/>
    </source>
</evidence>
<evidence type="ECO:0000255" key="3">
    <source>
        <dbReference type="PROSITE-ProRule" id="PRU00267"/>
    </source>
</evidence>
<evidence type="ECO:0000256" key="4">
    <source>
        <dbReference type="SAM" id="MobiDB-lite"/>
    </source>
</evidence>
<evidence type="ECO:0000305" key="5"/>
<proteinExistence type="inferred from homology"/>
<feature type="chain" id="PRO_0000048698" description="Sex-determining region Y protein">
    <location>
        <begin position="1"/>
        <end position="221"/>
    </location>
</feature>
<feature type="DNA-binding region" description="HMG box" evidence="3">
    <location>
        <begin position="54"/>
        <end position="122"/>
    </location>
</feature>
<feature type="region of interest" description="Disordered" evidence="4">
    <location>
        <begin position="24"/>
        <end position="53"/>
    </location>
</feature>